<evidence type="ECO:0000255" key="1">
    <source>
        <dbReference type="HAMAP-Rule" id="MF_01685"/>
    </source>
</evidence>
<proteinExistence type="inferred from homology"/>
<gene>
    <name type="ordered locus">LAF_1703</name>
</gene>
<reference key="1">
    <citation type="journal article" date="2008" name="DNA Res.">
        <title>Comparative genome analysis of Lactobacillus reuteri and Lactobacillus fermentum reveal a genomic island for reuterin and cobalamin production.</title>
        <authorList>
            <person name="Morita H."/>
            <person name="Toh H."/>
            <person name="Fukuda S."/>
            <person name="Horikawa H."/>
            <person name="Oshima K."/>
            <person name="Suzuki T."/>
            <person name="Murakami M."/>
            <person name="Hisamatsu S."/>
            <person name="Kato Y."/>
            <person name="Takizawa T."/>
            <person name="Fukuoka H."/>
            <person name="Yoshimura T."/>
            <person name="Itoh K."/>
            <person name="O'Sullivan D.J."/>
            <person name="McKay L.L."/>
            <person name="Ohno H."/>
            <person name="Kikuchi J."/>
            <person name="Masaoka T."/>
            <person name="Hattori M."/>
        </authorList>
    </citation>
    <scope>NUCLEOTIDE SEQUENCE [LARGE SCALE GENOMIC DNA]</scope>
    <source>
        <strain>NBRC 3956 / LMG 18251</strain>
    </source>
</reference>
<name>FENR_LIMF3</name>
<accession>B2GEF7</accession>
<comment type="catalytic activity">
    <reaction evidence="1">
        <text>2 reduced [2Fe-2S]-[ferredoxin] + NADP(+) + H(+) = 2 oxidized [2Fe-2S]-[ferredoxin] + NADPH</text>
        <dbReference type="Rhea" id="RHEA:20125"/>
        <dbReference type="Rhea" id="RHEA-COMP:10000"/>
        <dbReference type="Rhea" id="RHEA-COMP:10001"/>
        <dbReference type="ChEBI" id="CHEBI:15378"/>
        <dbReference type="ChEBI" id="CHEBI:33737"/>
        <dbReference type="ChEBI" id="CHEBI:33738"/>
        <dbReference type="ChEBI" id="CHEBI:57783"/>
        <dbReference type="ChEBI" id="CHEBI:58349"/>
        <dbReference type="EC" id="1.18.1.2"/>
    </reaction>
</comment>
<comment type="cofactor">
    <cofactor evidence="1">
        <name>FAD</name>
        <dbReference type="ChEBI" id="CHEBI:57692"/>
    </cofactor>
    <text evidence="1">Binds 1 FAD per subunit.</text>
</comment>
<comment type="subunit">
    <text evidence="1">Homodimer.</text>
</comment>
<comment type="similarity">
    <text evidence="1">Belongs to the ferredoxin--NADP reductase type 2 family.</text>
</comment>
<sequence>MEERYDVTIIGGGPAGMFAAFYCGLHQLKAQLIEALPQLGGQPAALYPEKRVWDVAGKAGVTGQELADDLAAQIEVAPVDQFLGEKVTDVVKEDDGSFTIHSAKRTSTSKSIVIAMGNGAFSPRKLALPGAEELEGKQVRYFANHKEDFKDQRVAVLGGGDAAIDMALMLEDVAEQVYLVHRRDAFRALEHTVAQLEASTIEKLTPYLPKDLTVNADQSVTLNLKKMRADEERPLEVDKVLVNYGFTSNNAALKDWSLDLASERGQIKVDQTMKTSVPGVYAIGDGVVYEGKVALIATGFGEAPTAITNLAKELYPDKRMAIHSSSMGIG</sequence>
<feature type="chain" id="PRO_0000364853" description="Ferredoxin--NADP reductase">
    <location>
        <begin position="1"/>
        <end position="330"/>
    </location>
</feature>
<feature type="binding site" evidence="1">
    <location>
        <position position="34"/>
    </location>
    <ligand>
        <name>FAD</name>
        <dbReference type="ChEBI" id="CHEBI:57692"/>
    </ligand>
</feature>
<feature type="binding site" evidence="1">
    <location>
        <position position="42"/>
    </location>
    <ligand>
        <name>FAD</name>
        <dbReference type="ChEBI" id="CHEBI:57692"/>
    </ligand>
</feature>
<feature type="binding site" evidence="1">
    <location>
        <position position="47"/>
    </location>
    <ligand>
        <name>FAD</name>
        <dbReference type="ChEBI" id="CHEBI:57692"/>
    </ligand>
</feature>
<feature type="binding site" evidence="1">
    <location>
        <position position="87"/>
    </location>
    <ligand>
        <name>FAD</name>
        <dbReference type="ChEBI" id="CHEBI:57692"/>
    </ligand>
</feature>
<feature type="binding site" evidence="1">
    <location>
        <position position="121"/>
    </location>
    <ligand>
        <name>FAD</name>
        <dbReference type="ChEBI" id="CHEBI:57692"/>
    </ligand>
</feature>
<feature type="binding site" evidence="1">
    <location>
        <position position="285"/>
    </location>
    <ligand>
        <name>FAD</name>
        <dbReference type="ChEBI" id="CHEBI:57692"/>
    </ligand>
</feature>
<feature type="binding site" evidence="1">
    <location>
        <position position="325"/>
    </location>
    <ligand>
        <name>FAD</name>
        <dbReference type="ChEBI" id="CHEBI:57692"/>
    </ligand>
</feature>
<keyword id="KW-0274">FAD</keyword>
<keyword id="KW-0285">Flavoprotein</keyword>
<keyword id="KW-0521">NADP</keyword>
<keyword id="KW-0560">Oxidoreductase</keyword>
<keyword id="KW-1185">Reference proteome</keyword>
<dbReference type="EC" id="1.18.1.2" evidence="1"/>
<dbReference type="EMBL" id="AP008937">
    <property type="protein sequence ID" value="BAG28039.1"/>
    <property type="molecule type" value="Genomic_DNA"/>
</dbReference>
<dbReference type="RefSeq" id="WP_012391725.1">
    <property type="nucleotide sequence ID" value="NC_010610.1"/>
</dbReference>
<dbReference type="SMR" id="B2GEF7"/>
<dbReference type="KEGG" id="lfe:LAF_1703"/>
<dbReference type="PATRIC" id="fig|334390.5.peg.1878"/>
<dbReference type="eggNOG" id="COG0492">
    <property type="taxonomic scope" value="Bacteria"/>
</dbReference>
<dbReference type="HOGENOM" id="CLU_031864_5_5_9"/>
<dbReference type="Proteomes" id="UP000001697">
    <property type="component" value="Chromosome"/>
</dbReference>
<dbReference type="GO" id="GO:0004324">
    <property type="term" value="F:ferredoxin-NADP+ reductase activity"/>
    <property type="evidence" value="ECO:0007669"/>
    <property type="project" value="UniProtKB-UniRule"/>
</dbReference>
<dbReference type="GO" id="GO:0050660">
    <property type="term" value="F:flavin adenine dinucleotide binding"/>
    <property type="evidence" value="ECO:0007669"/>
    <property type="project" value="UniProtKB-UniRule"/>
</dbReference>
<dbReference type="GO" id="GO:0050661">
    <property type="term" value="F:NADP binding"/>
    <property type="evidence" value="ECO:0007669"/>
    <property type="project" value="UniProtKB-UniRule"/>
</dbReference>
<dbReference type="Gene3D" id="3.50.50.60">
    <property type="entry name" value="FAD/NAD(P)-binding domain"/>
    <property type="match status" value="2"/>
</dbReference>
<dbReference type="HAMAP" id="MF_01685">
    <property type="entry name" value="FENR2"/>
    <property type="match status" value="1"/>
</dbReference>
<dbReference type="InterPro" id="IPR036188">
    <property type="entry name" value="FAD/NAD-bd_sf"/>
</dbReference>
<dbReference type="InterPro" id="IPR023753">
    <property type="entry name" value="FAD/NAD-binding_dom"/>
</dbReference>
<dbReference type="InterPro" id="IPR022890">
    <property type="entry name" value="Fd--NADP_Rdtase_type_2"/>
</dbReference>
<dbReference type="InterPro" id="IPR050097">
    <property type="entry name" value="Ferredoxin-NADP_redctase_2"/>
</dbReference>
<dbReference type="PANTHER" id="PTHR48105">
    <property type="entry name" value="THIOREDOXIN REDUCTASE 1-RELATED-RELATED"/>
    <property type="match status" value="1"/>
</dbReference>
<dbReference type="Pfam" id="PF07992">
    <property type="entry name" value="Pyr_redox_2"/>
    <property type="match status" value="1"/>
</dbReference>
<dbReference type="PRINTS" id="PR00368">
    <property type="entry name" value="FADPNR"/>
</dbReference>
<dbReference type="PRINTS" id="PR00469">
    <property type="entry name" value="PNDRDTASEII"/>
</dbReference>
<dbReference type="SUPFAM" id="SSF51905">
    <property type="entry name" value="FAD/NAD(P)-binding domain"/>
    <property type="match status" value="1"/>
</dbReference>
<protein>
    <recommendedName>
        <fullName evidence="1">Ferredoxin--NADP reductase</fullName>
        <shortName evidence="1">FNR</shortName>
        <shortName evidence="1">Fd-NADP(+) reductase</shortName>
        <ecNumber evidence="1">1.18.1.2</ecNumber>
    </recommendedName>
</protein>
<organism>
    <name type="scientific">Limosilactobacillus fermentum (strain NBRC 3956 / LMG 18251)</name>
    <name type="common">Lactobacillus fermentum</name>
    <dbReference type="NCBI Taxonomy" id="334390"/>
    <lineage>
        <taxon>Bacteria</taxon>
        <taxon>Bacillati</taxon>
        <taxon>Bacillota</taxon>
        <taxon>Bacilli</taxon>
        <taxon>Lactobacillales</taxon>
        <taxon>Lactobacillaceae</taxon>
        <taxon>Limosilactobacillus</taxon>
    </lineage>
</organism>